<name>K1PF_RHOCA</name>
<dbReference type="EC" id="2.7.1.56" evidence="2"/>
<dbReference type="EMBL" id="X53150">
    <property type="protein sequence ID" value="CAA37302.1"/>
    <property type="molecule type" value="Genomic_DNA"/>
</dbReference>
<dbReference type="PIR" id="A39407">
    <property type="entry name" value="A39407"/>
</dbReference>
<dbReference type="SMR" id="P23386"/>
<dbReference type="OMA" id="KPYMIKP"/>
<dbReference type="GO" id="GO:0005829">
    <property type="term" value="C:cytosol"/>
    <property type="evidence" value="ECO:0007669"/>
    <property type="project" value="TreeGrafter"/>
</dbReference>
<dbReference type="GO" id="GO:0008662">
    <property type="term" value="F:1-phosphofructokinase activity"/>
    <property type="evidence" value="ECO:0007669"/>
    <property type="project" value="UniProtKB-EC"/>
</dbReference>
<dbReference type="GO" id="GO:0005524">
    <property type="term" value="F:ATP binding"/>
    <property type="evidence" value="ECO:0007669"/>
    <property type="project" value="UniProtKB-KW"/>
</dbReference>
<dbReference type="CDD" id="cd01164">
    <property type="entry name" value="FruK_PfkB_like"/>
    <property type="match status" value="1"/>
</dbReference>
<dbReference type="FunFam" id="3.40.1190.20:FF:000001">
    <property type="entry name" value="Phosphofructokinase"/>
    <property type="match status" value="1"/>
</dbReference>
<dbReference type="Gene3D" id="3.40.1190.20">
    <property type="match status" value="1"/>
</dbReference>
<dbReference type="InterPro" id="IPR022463">
    <property type="entry name" value="1-PFruKinase"/>
</dbReference>
<dbReference type="InterPro" id="IPR002173">
    <property type="entry name" value="Carboh/pur_kinase_PfkB_CS"/>
</dbReference>
<dbReference type="InterPro" id="IPR011611">
    <property type="entry name" value="PfkB_dom"/>
</dbReference>
<dbReference type="InterPro" id="IPR029056">
    <property type="entry name" value="Ribokinase-like"/>
</dbReference>
<dbReference type="InterPro" id="IPR017583">
    <property type="entry name" value="Tagatose/fructose_Pkinase"/>
</dbReference>
<dbReference type="NCBIfam" id="TIGR03168">
    <property type="entry name" value="1-PFK"/>
    <property type="match status" value="1"/>
</dbReference>
<dbReference type="NCBIfam" id="TIGR03828">
    <property type="entry name" value="pfkB"/>
    <property type="match status" value="1"/>
</dbReference>
<dbReference type="PANTHER" id="PTHR46566:SF5">
    <property type="entry name" value="1-PHOSPHOFRUCTOKINASE"/>
    <property type="match status" value="1"/>
</dbReference>
<dbReference type="PANTHER" id="PTHR46566">
    <property type="entry name" value="1-PHOSPHOFRUCTOKINASE-RELATED"/>
    <property type="match status" value="1"/>
</dbReference>
<dbReference type="Pfam" id="PF00294">
    <property type="entry name" value="PfkB"/>
    <property type="match status" value="1"/>
</dbReference>
<dbReference type="PIRSF" id="PIRSF000535">
    <property type="entry name" value="1PFK/6PFK/LacC"/>
    <property type="match status" value="1"/>
</dbReference>
<dbReference type="SUPFAM" id="SSF53613">
    <property type="entry name" value="Ribokinase-like"/>
    <property type="match status" value="1"/>
</dbReference>
<dbReference type="PROSITE" id="PS00583">
    <property type="entry name" value="PFKB_KINASES_1"/>
    <property type="match status" value="1"/>
</dbReference>
<dbReference type="PROSITE" id="PS00584">
    <property type="entry name" value="PFKB_KINASES_2"/>
    <property type="match status" value="1"/>
</dbReference>
<reference key="1">
    <citation type="journal article" date="1991" name="J. Bacteriol.">
        <title>Nucleotide sequence of the Rhodobacter capsulatus fruK gene, which encodes fructose-1-phosphate kinase: evidence for a kinase superfamily including both phosphofructokinases of Escherichia coli.</title>
        <authorList>
            <person name="Wu L.-F."/>
            <person name="Reizer A."/>
            <person name="Reizer J."/>
            <person name="Cai B."/>
            <person name="Tomich J.M."/>
            <person name="Saier M.H. Jr."/>
        </authorList>
    </citation>
    <scope>NUCLEOTIDE SEQUENCE [GENOMIC DNA]</scope>
    <source>
        <strain>DSM 938 / 37b4</strain>
    </source>
</reference>
<reference key="2">
    <citation type="journal article" date="1990" name="J. Bacteriol.">
        <title>Nucleotide sequence of the fruA gene, encoding the fructose permease of the Rhodobacter capsulatus phosphotransferase system, and analyses of the deduced protein sequence.</title>
        <authorList>
            <person name="Wu L.-F."/>
            <person name="Saier M.H. Jr."/>
        </authorList>
    </citation>
    <scope>NUCLEOTIDE SEQUENCE [GENOMIC DNA] OF 288-316</scope>
    <source>
        <strain>DSM 938 / 37b4</strain>
    </source>
</reference>
<protein>
    <recommendedName>
        <fullName evidence="2">1-phosphofructokinase</fullName>
        <ecNumber evidence="2">2.7.1.56</ecNumber>
    </recommendedName>
    <alternativeName>
        <fullName evidence="3 4">Fructose 1-phosphate kinase</fullName>
        <shortName evidence="2">Fru1PK</shortName>
    </alternativeName>
</protein>
<accession>P23386</accession>
<evidence type="ECO:0000250" key="1">
    <source>
        <dbReference type="UniProtKB" id="P0A9J6"/>
    </source>
</evidence>
<evidence type="ECO:0000250" key="2">
    <source>
        <dbReference type="UniProtKB" id="P0AEW9"/>
    </source>
</evidence>
<evidence type="ECO:0000303" key="3">
    <source>
    </source>
</evidence>
<evidence type="ECO:0000303" key="4">
    <source>
    </source>
</evidence>
<evidence type="ECO:0000305" key="5"/>
<organism>
    <name type="scientific">Rhodobacter capsulatus</name>
    <name type="common">Rhodopseudomonas capsulata</name>
    <dbReference type="NCBI Taxonomy" id="1061"/>
    <lineage>
        <taxon>Bacteria</taxon>
        <taxon>Pseudomonadati</taxon>
        <taxon>Pseudomonadota</taxon>
        <taxon>Alphaproteobacteria</taxon>
        <taxon>Rhodobacterales</taxon>
        <taxon>Rhodobacter group</taxon>
        <taxon>Rhodobacter</taxon>
    </lineage>
</organism>
<sequence>MTLRIATVSLNSAVDQTVTVPGFTADAVNRVAASRIDAGGKGVNVASFLAHVGHGVAVTGLLGAENAALFARHFAATGLVDACQRLPGATRTNVKIVDPLQDQVTDLNFPGIAAGPADLDAVAATLTELLAQGLDWVALCGSLPAGIGAEAYAELAALARKGGARVALDTSGPALGLALAARPDIVKPNVAELGAHLGRTLTGLESVREAARDLAASGVGLVAVSMGAGGAVLVRGAEAVLAIPPATPIASTVGAGDAMVAGLIHAATLGLDLAETARLATAFSLGALGEIGPHLPPPERLAALARTVTVKTLPPV</sequence>
<comment type="function">
    <text evidence="2">Catalyzes the ATP-dependent phosphorylation of fructose-l-phosphate to fructose-l,6-bisphosphate.</text>
</comment>
<comment type="catalytic activity">
    <reaction evidence="2">
        <text>beta-D-fructose 1-phosphate + ATP = beta-D-fructose 1,6-bisphosphate + ADP + H(+)</text>
        <dbReference type="Rhea" id="RHEA:14213"/>
        <dbReference type="ChEBI" id="CHEBI:15378"/>
        <dbReference type="ChEBI" id="CHEBI:30616"/>
        <dbReference type="ChEBI" id="CHEBI:32966"/>
        <dbReference type="ChEBI" id="CHEBI:138881"/>
        <dbReference type="ChEBI" id="CHEBI:456216"/>
        <dbReference type="EC" id="2.7.1.56"/>
    </reaction>
</comment>
<comment type="similarity">
    <text evidence="5">Belongs to the carbohydrate kinase PfkB family.</text>
</comment>
<proteinExistence type="inferred from homology"/>
<keyword id="KW-0067">ATP-binding</keyword>
<keyword id="KW-0418">Kinase</keyword>
<keyword id="KW-0547">Nucleotide-binding</keyword>
<keyword id="KW-0808">Transferase</keyword>
<gene>
    <name evidence="3 4" type="primary">fruK</name>
</gene>
<feature type="chain" id="PRO_0000080081" description="1-phosphofructokinase">
    <location>
        <begin position="1"/>
        <end position="316"/>
    </location>
</feature>
<feature type="active site" description="Proton acceptor" evidence="1">
    <location>
        <position position="257"/>
    </location>
</feature>
<feature type="binding site" evidence="1">
    <location>
        <begin position="225"/>
        <end position="230"/>
    </location>
    <ligand>
        <name>ATP</name>
        <dbReference type="ChEBI" id="CHEBI:30616"/>
    </ligand>
</feature>
<feature type="binding site" evidence="1">
    <location>
        <begin position="256"/>
        <end position="257"/>
    </location>
    <ligand>
        <name>ATP</name>
        <dbReference type="ChEBI" id="CHEBI:30616"/>
    </ligand>
</feature>